<gene>
    <name evidence="2" type="primary">trmB</name>
    <name type="ordered locus">GbCGDNIH1_2398</name>
</gene>
<protein>
    <recommendedName>
        <fullName evidence="2">tRNA (guanine-N(7)-)-methyltransferase</fullName>
        <ecNumber evidence="2">2.1.1.33</ecNumber>
    </recommendedName>
    <alternativeName>
        <fullName evidence="2">tRNA (guanine(46)-N(7))-methyltransferase</fullName>
    </alternativeName>
    <alternativeName>
        <fullName evidence="2">tRNA(m7G46)-methyltransferase</fullName>
    </alternativeName>
</protein>
<comment type="function">
    <text evidence="2">Catalyzes the formation of N(7)-methylguanine at position 46 (m7G46) in tRNA.</text>
</comment>
<comment type="catalytic activity">
    <reaction evidence="2">
        <text>guanosine(46) in tRNA + S-adenosyl-L-methionine = N(7)-methylguanosine(46) in tRNA + S-adenosyl-L-homocysteine</text>
        <dbReference type="Rhea" id="RHEA:42708"/>
        <dbReference type="Rhea" id="RHEA-COMP:10188"/>
        <dbReference type="Rhea" id="RHEA-COMP:10189"/>
        <dbReference type="ChEBI" id="CHEBI:57856"/>
        <dbReference type="ChEBI" id="CHEBI:59789"/>
        <dbReference type="ChEBI" id="CHEBI:74269"/>
        <dbReference type="ChEBI" id="CHEBI:74480"/>
        <dbReference type="EC" id="2.1.1.33"/>
    </reaction>
</comment>
<comment type="pathway">
    <text evidence="2">tRNA modification; N(7)-methylguanine-tRNA biosynthesis.</text>
</comment>
<comment type="similarity">
    <text evidence="2">Belongs to the class I-like SAM-binding methyltransferase superfamily. TrmB family.</text>
</comment>
<evidence type="ECO:0000250" key="1"/>
<evidence type="ECO:0000255" key="2">
    <source>
        <dbReference type="HAMAP-Rule" id="MF_01057"/>
    </source>
</evidence>
<evidence type="ECO:0000256" key="3">
    <source>
        <dbReference type="SAM" id="MobiDB-lite"/>
    </source>
</evidence>
<organism>
    <name type="scientific">Granulibacter bethesdensis (strain ATCC BAA-1260 / CGDNIH1)</name>
    <dbReference type="NCBI Taxonomy" id="391165"/>
    <lineage>
        <taxon>Bacteria</taxon>
        <taxon>Pseudomonadati</taxon>
        <taxon>Pseudomonadota</taxon>
        <taxon>Alphaproteobacteria</taxon>
        <taxon>Acetobacterales</taxon>
        <taxon>Acetobacteraceae</taxon>
        <taxon>Granulibacter</taxon>
    </lineage>
</organism>
<keyword id="KW-0489">Methyltransferase</keyword>
<keyword id="KW-1185">Reference proteome</keyword>
<keyword id="KW-0949">S-adenosyl-L-methionine</keyword>
<keyword id="KW-0808">Transferase</keyword>
<keyword id="KW-0819">tRNA processing</keyword>
<dbReference type="EC" id="2.1.1.33" evidence="2"/>
<dbReference type="EMBL" id="CP000394">
    <property type="protein sequence ID" value="ABI63296.1"/>
    <property type="molecule type" value="Genomic_DNA"/>
</dbReference>
<dbReference type="RefSeq" id="WP_011633098.1">
    <property type="nucleotide sequence ID" value="NC_008343.2"/>
</dbReference>
<dbReference type="SMR" id="Q0BPF6"/>
<dbReference type="STRING" id="391165.GbCGDNIH1_2398"/>
<dbReference type="KEGG" id="gbe:GbCGDNIH1_2398"/>
<dbReference type="eggNOG" id="COG0220">
    <property type="taxonomic scope" value="Bacteria"/>
</dbReference>
<dbReference type="HOGENOM" id="CLU_050910_0_3_5"/>
<dbReference type="OrthoDB" id="9802090at2"/>
<dbReference type="UniPathway" id="UPA00989"/>
<dbReference type="Proteomes" id="UP000001963">
    <property type="component" value="Chromosome"/>
</dbReference>
<dbReference type="GO" id="GO:0043527">
    <property type="term" value="C:tRNA methyltransferase complex"/>
    <property type="evidence" value="ECO:0007669"/>
    <property type="project" value="TreeGrafter"/>
</dbReference>
<dbReference type="GO" id="GO:0008176">
    <property type="term" value="F:tRNA (guanine(46)-N7)-methyltransferase activity"/>
    <property type="evidence" value="ECO:0007669"/>
    <property type="project" value="UniProtKB-UniRule"/>
</dbReference>
<dbReference type="Gene3D" id="3.40.50.150">
    <property type="entry name" value="Vaccinia Virus protein VP39"/>
    <property type="match status" value="1"/>
</dbReference>
<dbReference type="HAMAP" id="MF_01057">
    <property type="entry name" value="tRNA_methyltr_TrmB"/>
    <property type="match status" value="1"/>
</dbReference>
<dbReference type="InterPro" id="IPR029063">
    <property type="entry name" value="SAM-dependent_MTases_sf"/>
</dbReference>
<dbReference type="InterPro" id="IPR003358">
    <property type="entry name" value="tRNA_(Gua-N-7)_MeTrfase_Trmb"/>
</dbReference>
<dbReference type="InterPro" id="IPR055361">
    <property type="entry name" value="tRNA_methyltr_TrmB_bact"/>
</dbReference>
<dbReference type="PANTHER" id="PTHR23417">
    <property type="entry name" value="3-DEOXY-D-MANNO-OCTULOSONIC-ACID TRANSFERASE/TRNA GUANINE-N 7 - -METHYLTRANSFERASE"/>
    <property type="match status" value="1"/>
</dbReference>
<dbReference type="PANTHER" id="PTHR23417:SF14">
    <property type="entry name" value="PENTACOTRIPEPTIDE-REPEAT REGION OF PRORP DOMAIN-CONTAINING PROTEIN"/>
    <property type="match status" value="1"/>
</dbReference>
<dbReference type="Pfam" id="PF02390">
    <property type="entry name" value="Methyltransf_4"/>
    <property type="match status" value="1"/>
</dbReference>
<dbReference type="SUPFAM" id="SSF53335">
    <property type="entry name" value="S-adenosyl-L-methionine-dependent methyltransferases"/>
    <property type="match status" value="1"/>
</dbReference>
<dbReference type="PROSITE" id="PS51625">
    <property type="entry name" value="SAM_MT_TRMB"/>
    <property type="match status" value="1"/>
</dbReference>
<reference key="1">
    <citation type="journal article" date="2007" name="J. Bacteriol.">
        <title>Genome sequence analysis of the emerging human pathogenic acetic acid bacterium Granulibacter bethesdensis.</title>
        <authorList>
            <person name="Greenberg D.E."/>
            <person name="Porcella S.F."/>
            <person name="Zelazny A.M."/>
            <person name="Virtaneva K."/>
            <person name="Sturdevant D.E."/>
            <person name="Kupko J.J. III"/>
            <person name="Barbian K.D."/>
            <person name="Babar A."/>
            <person name="Dorward D.W."/>
            <person name="Holland S.M."/>
        </authorList>
    </citation>
    <scope>NUCLEOTIDE SEQUENCE [LARGE SCALE GENOMIC DNA]</scope>
    <source>
        <strain>ATCC BAA-1260 / CGDNIH1</strain>
    </source>
</reference>
<accession>Q0BPF6</accession>
<name>TRMB_GRABC</name>
<sequence>MPDMTMKSQPDRLYGRQRGHALRPRQQRLLDLTLPRLRYAGPSSLRGVSPLWLEIGFGGGEHAVAQIEAHPDVTLIACEVFENGLCSLLSRLLPEPLDEETAPLPGNLRVWDDDARPLLRDLPDQVLDRVFLMFPDPWPKARHAKRRFVHPENAATLARVMKPGAEWRIASDDPTYQAWVPEVMERQTAFELLAVSNERPEGWPPTRYEAKAIRAGRQPLYWRYVRR</sequence>
<feature type="chain" id="PRO_0000288153" description="tRNA (guanine-N(7)-)-methyltransferase">
    <location>
        <begin position="1"/>
        <end position="227"/>
    </location>
</feature>
<feature type="region of interest" description="Disordered" evidence="3">
    <location>
        <begin position="1"/>
        <end position="21"/>
    </location>
</feature>
<feature type="active site" evidence="1">
    <location>
        <position position="136"/>
    </location>
</feature>
<feature type="binding site" evidence="2">
    <location>
        <position position="54"/>
    </location>
    <ligand>
        <name>S-adenosyl-L-methionine</name>
        <dbReference type="ChEBI" id="CHEBI:59789"/>
    </ligand>
</feature>
<feature type="binding site" evidence="2">
    <location>
        <position position="79"/>
    </location>
    <ligand>
        <name>S-adenosyl-L-methionine</name>
        <dbReference type="ChEBI" id="CHEBI:59789"/>
    </ligand>
</feature>
<feature type="binding site" evidence="2">
    <location>
        <position position="114"/>
    </location>
    <ligand>
        <name>S-adenosyl-L-methionine</name>
        <dbReference type="ChEBI" id="CHEBI:59789"/>
    </ligand>
</feature>
<feature type="binding site" evidence="2">
    <location>
        <position position="136"/>
    </location>
    <ligand>
        <name>S-adenosyl-L-methionine</name>
        <dbReference type="ChEBI" id="CHEBI:59789"/>
    </ligand>
</feature>
<feature type="binding site" evidence="2">
    <location>
        <position position="140"/>
    </location>
    <ligand>
        <name>substrate</name>
    </ligand>
</feature>
<feature type="binding site" evidence="2">
    <location>
        <position position="172"/>
    </location>
    <ligand>
        <name>substrate</name>
    </ligand>
</feature>
<feature type="binding site" evidence="2">
    <location>
        <begin position="206"/>
        <end position="209"/>
    </location>
    <ligand>
        <name>substrate</name>
    </ligand>
</feature>
<proteinExistence type="inferred from homology"/>